<sequence length="752" mass="83604">MTISSQEQETKKVQVTVDKNPVATSFEKWAKPGHFSRTLAKGPKTTTWIWNLHADAHDFDSHTSSLEEVSRKIFSAHFGQLAIIFLWLSGMYFHGAKFSNYIAWLSNPTAIKPSAQIVWPIVGQEILNGDVGGGFQGVQITSGFFQIWRASGITTEFELYATAIGGLFMACLMLFAGWFHYHKAAPKLEWFQNVESMMNHHLAGLLGLGCLGWAGHQIHISIPINKLLDSGVSPQELPLPHEFLVNRELVSQLYPSFSKGIIPFFTLNWNEYSDFLTFKGGLNPITGGLWLTDTAHHHLALAVLFLVAGHMYRTNWGIGHSMKEILEAHKGPFTGEGHKGIYEILTTSWHAQLAINLAMMGSLSIIVAHHMYAMPPYPYIATDYPTQLSLFTHHMWIGGFCIVGAGAHASIFMVRDYNPAQNYNNVLDRVIRHRDAIISHLNWVCIFLGFHSFGLYIHNDTMRALGRSQDMFSDTAIQLQPIFAQWIQNIHSLAPSNTSPNALATASYAFGGDVIAVNNKIAMMPINLGTADFMVHHIHAFTIHVTVLILVKGFLFSRNSRLIPDKSSLGFRFPCDGPGRGGTCQVSGWDHVFLGLFWMYNSLSIAIFHFSWKMQSDVWGSVTPAGTVSHITGGNFAQSAITINGWLRDFLWAQASQVIQSYGSALSAYGLIFLGAHFVWAFSLMFLFSGRGYWQELIESIVWAHNKVKVAPSIQPRALSITQGRAVGVAHYLLGGIGTTWAFFLARIISVG</sequence>
<protein>
    <recommendedName>
        <fullName evidence="1">Photosystem I P700 chlorophyll a apoprotein A1</fullName>
        <ecNumber evidence="1">1.97.1.12</ecNumber>
    </recommendedName>
    <alternativeName>
        <fullName evidence="1">PSI-A</fullName>
    </alternativeName>
    <alternativeName>
        <fullName evidence="1">PsaA</fullName>
    </alternativeName>
</protein>
<feature type="chain" id="PRO_0000088551" description="Photosystem I P700 chlorophyll a apoprotein A1">
    <location>
        <begin position="1"/>
        <end position="752"/>
    </location>
</feature>
<feature type="transmembrane region" description="Helical; Name=I" evidence="1">
    <location>
        <begin position="73"/>
        <end position="96"/>
    </location>
</feature>
<feature type="transmembrane region" description="Helical; Name=II" evidence="1">
    <location>
        <begin position="159"/>
        <end position="182"/>
    </location>
</feature>
<feature type="transmembrane region" description="Helical; Name=III" evidence="1">
    <location>
        <begin position="198"/>
        <end position="222"/>
    </location>
</feature>
<feature type="transmembrane region" description="Helical; Name=IV" evidence="1">
    <location>
        <begin position="294"/>
        <end position="312"/>
    </location>
</feature>
<feature type="transmembrane region" description="Helical; Name=V" evidence="1">
    <location>
        <begin position="349"/>
        <end position="372"/>
    </location>
</feature>
<feature type="transmembrane region" description="Helical; Name=VI" evidence="1">
    <location>
        <begin position="388"/>
        <end position="414"/>
    </location>
</feature>
<feature type="transmembrane region" description="Helical; Name=VII" evidence="1">
    <location>
        <begin position="436"/>
        <end position="458"/>
    </location>
</feature>
<feature type="transmembrane region" description="Helical; Name=VIII" evidence="1">
    <location>
        <begin position="533"/>
        <end position="551"/>
    </location>
</feature>
<feature type="transmembrane region" description="Helical; Name=IX" evidence="1">
    <location>
        <begin position="591"/>
        <end position="612"/>
    </location>
</feature>
<feature type="transmembrane region" description="Helical; Name=X" evidence="1">
    <location>
        <begin position="666"/>
        <end position="688"/>
    </location>
</feature>
<feature type="transmembrane region" description="Helical; Name=XI" evidence="1">
    <location>
        <begin position="726"/>
        <end position="746"/>
    </location>
</feature>
<feature type="binding site" evidence="1">
    <location>
        <position position="575"/>
    </location>
    <ligand>
        <name>[4Fe-4S] cluster</name>
        <dbReference type="ChEBI" id="CHEBI:49883"/>
        <note>ligand shared between dimeric partners</note>
    </ligand>
</feature>
<feature type="binding site" evidence="1">
    <location>
        <position position="584"/>
    </location>
    <ligand>
        <name>[4Fe-4S] cluster</name>
        <dbReference type="ChEBI" id="CHEBI:49883"/>
        <note>ligand shared between dimeric partners</note>
    </ligand>
</feature>
<feature type="binding site" description="axial binding residue" evidence="1">
    <location>
        <position position="677"/>
    </location>
    <ligand>
        <name>chlorophyll a'</name>
        <dbReference type="ChEBI" id="CHEBI:189419"/>
        <label>A1</label>
    </ligand>
    <ligandPart>
        <name>Mg</name>
        <dbReference type="ChEBI" id="CHEBI:25107"/>
    </ligandPart>
</feature>
<feature type="binding site" description="axial binding residue" evidence="1">
    <location>
        <position position="685"/>
    </location>
    <ligand>
        <name>chlorophyll a</name>
        <dbReference type="ChEBI" id="CHEBI:58416"/>
        <label>A3</label>
    </ligand>
    <ligandPart>
        <name>Mg</name>
        <dbReference type="ChEBI" id="CHEBI:25107"/>
    </ligandPart>
</feature>
<feature type="binding site" evidence="1">
    <location>
        <position position="693"/>
    </location>
    <ligand>
        <name>chlorophyll a</name>
        <dbReference type="ChEBI" id="CHEBI:58416"/>
        <label>A3</label>
    </ligand>
</feature>
<feature type="binding site" evidence="1">
    <location>
        <position position="694"/>
    </location>
    <ligand>
        <name>phylloquinone</name>
        <dbReference type="ChEBI" id="CHEBI:18067"/>
        <label>A</label>
    </ligand>
</feature>
<organism>
    <name type="scientific">Gracilaria tenuistipitata var. liui</name>
    <name type="common">Red alga</name>
    <dbReference type="NCBI Taxonomy" id="285951"/>
    <lineage>
        <taxon>Eukaryota</taxon>
        <taxon>Rhodophyta</taxon>
        <taxon>Florideophyceae</taxon>
        <taxon>Rhodymeniophycidae</taxon>
        <taxon>Gracilariales</taxon>
        <taxon>Gracilariaceae</taxon>
        <taxon>Gracilaria</taxon>
        <taxon>Gracilaria tenuistipitata</taxon>
    </lineage>
</organism>
<evidence type="ECO:0000255" key="1">
    <source>
        <dbReference type="HAMAP-Rule" id="MF_00458"/>
    </source>
</evidence>
<evidence type="ECO:0000305" key="2"/>
<gene>
    <name evidence="1" type="primary">psaA</name>
    <name type="ordered locus">Grc000108</name>
</gene>
<reference key="1">
    <citation type="journal article" date="2004" name="J. Mol. Evol.">
        <title>Comparative analysis of the complete plastid genome sequence of the red alga Gracilaria tenuistipitata var. liui provides insights into the evolution of rhodoplasts and their relationship to other plastids.</title>
        <authorList>
            <person name="Hagopian J.C."/>
            <person name="Reis M."/>
            <person name="Kitajima J.P."/>
            <person name="Bhattacharya D."/>
            <person name="de Oliveira M.C."/>
        </authorList>
    </citation>
    <scope>NUCLEOTIDE SEQUENCE [LARGE SCALE GENOMIC DNA]</scope>
</reference>
<geneLocation type="chloroplast"/>
<keyword id="KW-0004">4Fe-4S</keyword>
<keyword id="KW-0148">Chlorophyll</keyword>
<keyword id="KW-0150">Chloroplast</keyword>
<keyword id="KW-0157">Chromophore</keyword>
<keyword id="KW-0249">Electron transport</keyword>
<keyword id="KW-0408">Iron</keyword>
<keyword id="KW-0411">Iron-sulfur</keyword>
<keyword id="KW-0460">Magnesium</keyword>
<keyword id="KW-0472">Membrane</keyword>
<keyword id="KW-0479">Metal-binding</keyword>
<keyword id="KW-0560">Oxidoreductase</keyword>
<keyword id="KW-0602">Photosynthesis</keyword>
<keyword id="KW-0603">Photosystem I</keyword>
<keyword id="KW-0934">Plastid</keyword>
<keyword id="KW-0793">Thylakoid</keyword>
<keyword id="KW-0812">Transmembrane</keyword>
<keyword id="KW-1133">Transmembrane helix</keyword>
<keyword id="KW-0813">Transport</keyword>
<dbReference type="EC" id="1.97.1.12" evidence="1"/>
<dbReference type="EMBL" id="AY673996">
    <property type="protein sequence ID" value="AAT79689.1"/>
    <property type="status" value="ALT_INIT"/>
    <property type="molecule type" value="Genomic_DNA"/>
</dbReference>
<dbReference type="RefSeq" id="YP_063614.2">
    <property type="nucleotide sequence ID" value="NC_006137.1"/>
</dbReference>
<dbReference type="SMR" id="Q6B8U6"/>
<dbReference type="GeneID" id="2944017"/>
<dbReference type="GO" id="GO:0009535">
    <property type="term" value="C:chloroplast thylakoid membrane"/>
    <property type="evidence" value="ECO:0007669"/>
    <property type="project" value="UniProtKB-SubCell"/>
</dbReference>
<dbReference type="GO" id="GO:0009522">
    <property type="term" value="C:photosystem I"/>
    <property type="evidence" value="ECO:0007669"/>
    <property type="project" value="UniProtKB-KW"/>
</dbReference>
<dbReference type="GO" id="GO:0051539">
    <property type="term" value="F:4 iron, 4 sulfur cluster binding"/>
    <property type="evidence" value="ECO:0007669"/>
    <property type="project" value="UniProtKB-KW"/>
</dbReference>
<dbReference type="GO" id="GO:0016168">
    <property type="term" value="F:chlorophyll binding"/>
    <property type="evidence" value="ECO:0007669"/>
    <property type="project" value="UniProtKB-KW"/>
</dbReference>
<dbReference type="GO" id="GO:0009055">
    <property type="term" value="F:electron transfer activity"/>
    <property type="evidence" value="ECO:0007669"/>
    <property type="project" value="UniProtKB-UniRule"/>
</dbReference>
<dbReference type="GO" id="GO:0000287">
    <property type="term" value="F:magnesium ion binding"/>
    <property type="evidence" value="ECO:0007669"/>
    <property type="project" value="UniProtKB-UniRule"/>
</dbReference>
<dbReference type="GO" id="GO:0016491">
    <property type="term" value="F:oxidoreductase activity"/>
    <property type="evidence" value="ECO:0007669"/>
    <property type="project" value="UniProtKB-KW"/>
</dbReference>
<dbReference type="GO" id="GO:0015979">
    <property type="term" value="P:photosynthesis"/>
    <property type="evidence" value="ECO:0007669"/>
    <property type="project" value="UniProtKB-UniRule"/>
</dbReference>
<dbReference type="FunFam" id="1.20.1130.10:FF:000001">
    <property type="entry name" value="Photosystem I P700 chlorophyll a apoprotein A2"/>
    <property type="match status" value="1"/>
</dbReference>
<dbReference type="Gene3D" id="1.20.1130.10">
    <property type="entry name" value="Photosystem I PsaA/PsaB"/>
    <property type="match status" value="1"/>
</dbReference>
<dbReference type="HAMAP" id="MF_00458">
    <property type="entry name" value="PSI_PsaA"/>
    <property type="match status" value="1"/>
</dbReference>
<dbReference type="InterPro" id="IPR006243">
    <property type="entry name" value="PSI_PsaA"/>
</dbReference>
<dbReference type="InterPro" id="IPR001280">
    <property type="entry name" value="PSI_PsaA/B"/>
</dbReference>
<dbReference type="InterPro" id="IPR020586">
    <property type="entry name" value="PSI_PsaA/B_CS"/>
</dbReference>
<dbReference type="InterPro" id="IPR036408">
    <property type="entry name" value="PSI_PsaA/B_sf"/>
</dbReference>
<dbReference type="NCBIfam" id="TIGR01335">
    <property type="entry name" value="psaA"/>
    <property type="match status" value="1"/>
</dbReference>
<dbReference type="PANTHER" id="PTHR30128">
    <property type="entry name" value="OUTER MEMBRANE PROTEIN, OMPA-RELATED"/>
    <property type="match status" value="1"/>
</dbReference>
<dbReference type="PANTHER" id="PTHR30128:SF19">
    <property type="entry name" value="PHOTOSYSTEM I P700 CHLOROPHYLL A APOPROTEIN A1-RELATED"/>
    <property type="match status" value="1"/>
</dbReference>
<dbReference type="Pfam" id="PF00223">
    <property type="entry name" value="PsaA_PsaB"/>
    <property type="match status" value="1"/>
</dbReference>
<dbReference type="PIRSF" id="PIRSF002905">
    <property type="entry name" value="PSI_A"/>
    <property type="match status" value="1"/>
</dbReference>
<dbReference type="PRINTS" id="PR00257">
    <property type="entry name" value="PHOTSYSPSAAB"/>
</dbReference>
<dbReference type="SUPFAM" id="SSF81558">
    <property type="entry name" value="Photosystem I subunits PsaA/PsaB"/>
    <property type="match status" value="1"/>
</dbReference>
<dbReference type="PROSITE" id="PS00419">
    <property type="entry name" value="PHOTOSYSTEM_I_PSAAB"/>
    <property type="match status" value="1"/>
</dbReference>
<comment type="function">
    <text>PsaA and PsaB bind P700, the primary electron donor of photosystem I (PSI), as well as the electron acceptors A0, A1 and FX. PSI is a plastocyanin/cytochrome c6-ferredoxin oxidoreductase, converting photonic excitation into a charge separation, which transfers an electron from the donor P700 chlorophyll pair to the spectroscopically characterized acceptors A0, A1, FX, FA and FB in turn. Oxidized P700 is reduced on the lumenal side of the thylakoid membrane by plastocyanin or cytochrome c6.</text>
</comment>
<comment type="catalytic activity">
    <reaction evidence="1">
        <text>reduced [plastocyanin] + hnu + oxidized [2Fe-2S]-[ferredoxin] = oxidized [plastocyanin] + reduced [2Fe-2S]-[ferredoxin]</text>
        <dbReference type="Rhea" id="RHEA:30407"/>
        <dbReference type="Rhea" id="RHEA-COMP:10000"/>
        <dbReference type="Rhea" id="RHEA-COMP:10001"/>
        <dbReference type="Rhea" id="RHEA-COMP:10039"/>
        <dbReference type="Rhea" id="RHEA-COMP:10040"/>
        <dbReference type="ChEBI" id="CHEBI:29036"/>
        <dbReference type="ChEBI" id="CHEBI:30212"/>
        <dbReference type="ChEBI" id="CHEBI:33737"/>
        <dbReference type="ChEBI" id="CHEBI:33738"/>
        <dbReference type="ChEBI" id="CHEBI:49552"/>
        <dbReference type="EC" id="1.97.1.12"/>
    </reaction>
</comment>
<comment type="cofactor">
    <text evidence="1">P700 is a chlorophyll a/chlorophyll a' dimer, A0 is one or more chlorophyll a, A1 is one or both phylloquinones and FX is a shared 4Fe-4S iron-sulfur center.</text>
</comment>
<comment type="subunit">
    <text evidence="1">The PsaA/B heterodimer binds the P700 chlorophyll special pair and subsequent electron acceptors. PSI consists of a core antenna complex that captures photons, and an electron transfer chain that converts photonic excitation into a charge separation. The eukaryotic PSI reaction center is composed of at least 11 subunits.</text>
</comment>
<comment type="subcellular location">
    <subcellularLocation>
        <location evidence="1">Plastid</location>
        <location evidence="1">Chloroplast thylakoid membrane</location>
        <topology evidence="1">Multi-pass membrane protein</topology>
    </subcellularLocation>
</comment>
<comment type="similarity">
    <text evidence="1">Belongs to the PsaA/PsaB family.</text>
</comment>
<comment type="sequence caution" evidence="2">
    <conflict type="erroneous initiation">
        <sequence resource="EMBL-CDS" id="AAT79689"/>
    </conflict>
</comment>
<name>PSAA_GRATL</name>
<accession>Q6B8U6</accession>
<proteinExistence type="inferred from homology"/>